<gene>
    <name type="primary">fecA</name>
    <name type="ordered locus">b4291</name>
    <name type="ordered locus">JW4251</name>
</gene>
<evidence type="ECO:0000255" key="1">
    <source>
        <dbReference type="PROSITE-ProRule" id="PRU01360"/>
    </source>
</evidence>
<evidence type="ECO:0000269" key="2">
    <source>
    </source>
</evidence>
<evidence type="ECO:0000269" key="3">
    <source>
    </source>
</evidence>
<evidence type="ECO:0000269" key="4">
    <source>
    </source>
</evidence>
<evidence type="ECO:0000305" key="5"/>
<evidence type="ECO:0007829" key="6">
    <source>
        <dbReference type="PDB" id="1KMO"/>
    </source>
</evidence>
<evidence type="ECO:0007829" key="7">
    <source>
        <dbReference type="PDB" id="1KMP"/>
    </source>
</evidence>
<evidence type="ECO:0007829" key="8">
    <source>
        <dbReference type="PDB" id="1ZZV"/>
    </source>
</evidence>
<protein>
    <recommendedName>
        <fullName>Fe(3+) dicitrate transport protein FecA</fullName>
    </recommendedName>
    <alternativeName>
        <fullName>Iron(III) dicitrate transport protein FecA</fullName>
    </alternativeName>
</protein>
<reference key="1">
    <citation type="journal article" date="1988" name="J. Bacteriol.">
        <title>Genetics of the iron dicitrate transport system of Escherichia coli.</title>
        <authorList>
            <person name="Pressler U."/>
            <person name="Staudenmaier H."/>
            <person name="Zimmermann L."/>
            <person name="Braun V."/>
        </authorList>
    </citation>
    <scope>NUCLEOTIDE SEQUENCE [GENOMIC DNA]</scope>
    <scope>PROTEIN SEQUENCE OF 34-40</scope>
    <source>
        <strain>B</strain>
    </source>
</reference>
<reference key="2">
    <citation type="journal article" date="1995" name="Nucleic Acids Res.">
        <title>Analysis of the Escherichia coli genome VI: DNA sequence of the region from 92.8 through 100 minutes.</title>
        <authorList>
            <person name="Burland V.D."/>
            <person name="Plunkett G. III"/>
            <person name="Sofia H.J."/>
            <person name="Daniels D.L."/>
            <person name="Blattner F.R."/>
        </authorList>
    </citation>
    <scope>NUCLEOTIDE SEQUENCE [LARGE SCALE GENOMIC DNA]</scope>
    <source>
        <strain>K12 / MG1655 / ATCC 47076</strain>
    </source>
</reference>
<reference key="3">
    <citation type="journal article" date="1997" name="Science">
        <title>The complete genome sequence of Escherichia coli K-12.</title>
        <authorList>
            <person name="Blattner F.R."/>
            <person name="Plunkett G. III"/>
            <person name="Bloch C.A."/>
            <person name="Perna N.T."/>
            <person name="Burland V."/>
            <person name="Riley M."/>
            <person name="Collado-Vides J."/>
            <person name="Glasner J.D."/>
            <person name="Rode C.K."/>
            <person name="Mayhew G.F."/>
            <person name="Gregor J."/>
            <person name="Davis N.W."/>
            <person name="Kirkpatrick H.A."/>
            <person name="Goeden M.A."/>
            <person name="Rose D.J."/>
            <person name="Mau B."/>
            <person name="Shao Y."/>
        </authorList>
    </citation>
    <scope>NUCLEOTIDE SEQUENCE [LARGE SCALE GENOMIC DNA]</scope>
    <source>
        <strain>K12 / MG1655 / ATCC 47076</strain>
    </source>
</reference>
<reference key="4">
    <citation type="journal article" date="2006" name="Mol. Syst. Biol.">
        <title>Highly accurate genome sequences of Escherichia coli K-12 strains MG1655 and W3110.</title>
        <authorList>
            <person name="Hayashi K."/>
            <person name="Morooka N."/>
            <person name="Yamamoto Y."/>
            <person name="Fujita K."/>
            <person name="Isono K."/>
            <person name="Choi S."/>
            <person name="Ohtsubo E."/>
            <person name="Baba T."/>
            <person name="Wanner B.L."/>
            <person name="Mori H."/>
            <person name="Horiuchi T."/>
        </authorList>
    </citation>
    <scope>NUCLEOTIDE SEQUENCE [LARGE SCALE GENOMIC DNA]</scope>
    <source>
        <strain>K12 / W3110 / ATCC 27325 / DSM 5911</strain>
    </source>
</reference>
<reference key="5">
    <citation type="journal article" date="1990" name="J. Bacteriol.">
        <title>Novel two-component transmembrane transcription control: regulation of iron dicitrate transport in Escherichia coli K-12.</title>
        <authorList>
            <person name="van Hove B."/>
            <person name="Staudenmaier H."/>
            <person name="Braun V."/>
        </authorList>
    </citation>
    <scope>NUCLEOTIDE SEQUENCE [GENOMIC DNA] OF 1-428</scope>
</reference>
<reference key="6">
    <citation type="journal article" date="1989" name="J. Bacteriol.">
        <title>Nucleotide sequences of the fecBCDE genes and locations of the proteins suggest a periplasmic-binding-protein-dependent transport mechanism for iron(III) dicitrate in Escherichia coli.</title>
        <authorList>
            <person name="Staudenmaier H."/>
            <person name="van Hove B."/>
            <person name="Yaraghi Z."/>
            <person name="Braun V."/>
        </authorList>
    </citation>
    <scope>NUCLEOTIDE SEQUENCE [GENOMIC DNA] OF 731-774</scope>
    <source>
        <strain>K12</strain>
    </source>
</reference>
<reference key="7">
    <citation type="journal article" date="2000" name="J. Bacteriol.">
        <title>Surface signaling in ferric citrate transport gene induction: interaction of the FecA, FecR, and FecI regulatory proteins.</title>
        <authorList>
            <person name="Enz S."/>
            <person name="Mahren S."/>
            <person name="Stroeher U.H."/>
            <person name="Braun V."/>
        </authorList>
    </citation>
    <scope>INTERACTION WITH FECR</scope>
</reference>
<reference key="8">
    <citation type="journal article" date="2009" name="Mol. Cell">
        <title>Hydroxyurea induces hydroxyl radical-mediated cell death in Escherichia coli.</title>
        <authorList>
            <person name="Davies B.W."/>
            <person name="Kohanski M.A."/>
            <person name="Simmons L.A."/>
            <person name="Winkler J.A."/>
            <person name="Collins J.J."/>
            <person name="Walker G.C."/>
        </authorList>
    </citation>
    <scope>INDUCTION BY HYDROXYUREA</scope>
    <source>
        <strain>K12 / MC4100 / ATCC 35695 / DSM 6574</strain>
    </source>
</reference>
<name>FECA_ECOLI</name>
<organism>
    <name type="scientific">Escherichia coli (strain K12)</name>
    <dbReference type="NCBI Taxonomy" id="83333"/>
    <lineage>
        <taxon>Bacteria</taxon>
        <taxon>Pseudomonadati</taxon>
        <taxon>Pseudomonadota</taxon>
        <taxon>Gammaproteobacteria</taxon>
        <taxon>Enterobacterales</taxon>
        <taxon>Enterobacteriaceae</taxon>
        <taxon>Escherichia</taxon>
    </lineage>
</organism>
<sequence>MTPLRVFRKTTPLVNTIRLSLLPLAGLSFSAFAAQVNIAPGSLDKALNQYAAHSGFTLSVDASLTRGKQSNGLHGDYDVESGLQQLLDGSGLQVKPLGNNSWTLEPAPAPKEDALTVVGDWLGDARENDVFEHAGARDVIRREDFAKTGATTMREVLNRIPGVSAPENNGTGSHDLAMNFGIRGLNPRLASRSTVLMDGIPVPFAPYGQPQLSLAPVSLGNMDAIDVVRGGGAVRYGPQSVGGVVNFVTRAIPQDFGIEAGVEGQLSPTSSQNNPKETHNLMVGGTADNGFGTALLYSGTRGSDWREHSATRIDDLMLKSKYAPDEVHTFNSLLQYYDGEADMPGGLSRADYDADRWQSTRPYDRFWGRRKLASLGYQFQPDSQHKFNIQGFYTQTLRSGYLEQGKRITLSPRNYWVRGIEPRYSQIFMIGPSAHEVGVGYRYLNESTHEMRYYTATSSGQLPSGSSPYDRDTRSGTEAHAWYLDDKIDIGNWTITPGMRFEHIESYQNNAITGTHEEVSYNAPLPALNVLYHLTDSWNLYANTEGSFGTVQYSQIGKAVQSGNVEPEKARTWELGTRYDDGALTAEMGLFLINFNNQYDSNQTNDTVTARGKTRHTGLETQARYDLGTLTPTLDNVSIYASYAYVNAEIREKGDTYGNLVPFSPKHKGTLGVDYKPGNWTFNLNSDFQSSQFADNANTVKESADGSTGRIPGFMLWGARVAYDFGPQMADLNLAFGVKNIFDQDYFIRSYDDNNKGIYAGQPRTLYMQGSLKF</sequence>
<comment type="function">
    <text>FecA is the outer membrane receptor protein in the Fe(3+) dicitrate transport system.</text>
</comment>
<comment type="subunit">
    <text evidence="2">Interacts (via periplasmic N-terminus) with FecR (via periplasmic C-terminus).</text>
</comment>
<comment type="interaction">
    <interactant intactId="EBI-1131517">
        <id>P13036</id>
    </interactant>
    <interactant intactId="EBI-6399993">
        <id>P02929</id>
        <label>tonB</label>
    </interactant>
    <organismsDiffer>false</organismsDiffer>
    <experiments>3</experiments>
</comment>
<comment type="subcellular location">
    <subcellularLocation>
        <location evidence="1">Cell outer membrane</location>
        <topology evidence="1">Multi-pass membrane protein</topology>
    </subcellularLocation>
</comment>
<comment type="induction">
    <text evidence="3">For induction, the TonB and the ExbB proteins have to be active. Regulation by the iron level mediated by the Fur protein and induction by citrate plus iron suggest that the Fe(3+) dicitrate complex must enter the periplasm where it binds to a transmembrane protein, which regulates transcription of the fec genes directly or via a further inductor. Induced 2-fold by hydroxyurea (PubMed:20005847).</text>
</comment>
<comment type="similarity">
    <text evidence="5">Belongs to the TonB-dependent receptor family.</text>
</comment>
<feature type="signal peptide" evidence="4">
    <location>
        <begin position="1"/>
        <end position="33"/>
    </location>
</feature>
<feature type="chain" id="PRO_0000034746" description="Fe(3+) dicitrate transport protein FecA">
    <location>
        <begin position="34"/>
        <end position="774"/>
    </location>
</feature>
<feature type="domain" description="TBDR plug" evidence="1">
    <location>
        <begin position="129"/>
        <end position="250"/>
    </location>
</feature>
<feature type="domain" description="TBDR beta-barrel" evidence="1">
    <location>
        <begin position="255"/>
        <end position="774"/>
    </location>
</feature>
<feature type="short sequence motif" description="TonB box">
    <location>
        <begin position="56"/>
        <end position="63"/>
    </location>
</feature>
<feature type="short sequence motif" description="TonB C-terminal box">
    <location>
        <begin position="757"/>
        <end position="774"/>
    </location>
</feature>
<feature type="sequence conflict" description="In Ref. 1; AAA23760." evidence="5" ref="1">
    <original>T</original>
    <variation>A</variation>
    <location>
        <position position="16"/>
    </location>
</feature>
<feature type="sequence conflict" description="In Ref. 1; AAA23760." evidence="5" ref="1">
    <original>A</original>
    <variation>T</variation>
    <location>
        <position position="190"/>
    </location>
</feature>
<feature type="sequence conflict" description="In Ref. 1; AAA23760 and 5." evidence="5" ref="1 5">
    <original>T</original>
    <variation>M</variation>
    <location>
        <position position="300"/>
    </location>
</feature>
<feature type="sequence conflict" description="In Ref. 1; AAA23760." evidence="5" ref="1">
    <original>W</original>
    <variation>R</variation>
    <location>
        <position position="357"/>
    </location>
</feature>
<feature type="sequence conflict" description="In Ref. 1; AAA23760." evidence="5" ref="1">
    <original>L</original>
    <variation>V</variation>
    <location>
        <position position="444"/>
    </location>
</feature>
<feature type="sequence conflict" description="In Ref. 1; AAA23760." evidence="5" ref="1">
    <original>R</original>
    <variation>A</variation>
    <location>
        <position position="749"/>
    </location>
</feature>
<feature type="strand" evidence="8">
    <location>
        <begin position="36"/>
        <end position="38"/>
    </location>
</feature>
<feature type="helix" evidence="8">
    <location>
        <begin position="43"/>
        <end position="54"/>
    </location>
</feature>
<feature type="turn" evidence="8">
    <location>
        <begin position="62"/>
        <end position="65"/>
    </location>
</feature>
<feature type="strand" evidence="8">
    <location>
        <begin position="73"/>
        <end position="76"/>
    </location>
</feature>
<feature type="helix" evidence="8">
    <location>
        <begin position="79"/>
        <end position="86"/>
    </location>
</feature>
<feature type="turn" evidence="8">
    <location>
        <begin position="87"/>
        <end position="89"/>
    </location>
</feature>
<feature type="strand" evidence="8">
    <location>
        <begin position="93"/>
        <end position="98"/>
    </location>
</feature>
<feature type="strand" evidence="8">
    <location>
        <begin position="101"/>
        <end position="105"/>
    </location>
</feature>
<feature type="strand" evidence="8">
    <location>
        <begin position="108"/>
        <end position="110"/>
    </location>
</feature>
<feature type="helix" evidence="6">
    <location>
        <begin position="127"/>
        <end position="131"/>
    </location>
</feature>
<feature type="strand" evidence="6">
    <location>
        <begin position="137"/>
        <end position="141"/>
    </location>
</feature>
<feature type="helix" evidence="6">
    <location>
        <begin position="142"/>
        <end position="144"/>
    </location>
</feature>
<feature type="helix" evidence="6">
    <location>
        <begin position="146"/>
        <end position="148"/>
    </location>
</feature>
<feature type="helix" evidence="6">
    <location>
        <begin position="153"/>
        <end position="157"/>
    </location>
</feature>
<feature type="strand" evidence="7">
    <location>
        <begin position="174"/>
        <end position="177"/>
    </location>
</feature>
<feature type="helix" evidence="6">
    <location>
        <begin position="188"/>
        <end position="190"/>
    </location>
</feature>
<feature type="strand" evidence="6">
    <location>
        <begin position="192"/>
        <end position="197"/>
    </location>
</feature>
<feature type="strand" evidence="6">
    <location>
        <begin position="203"/>
        <end position="205"/>
    </location>
</feature>
<feature type="turn" evidence="6">
    <location>
        <begin position="206"/>
        <end position="208"/>
    </location>
</feature>
<feature type="helix" evidence="6">
    <location>
        <begin position="219"/>
        <end position="221"/>
    </location>
</feature>
<feature type="strand" evidence="6">
    <location>
        <begin position="222"/>
        <end position="228"/>
    </location>
</feature>
<feature type="turn" evidence="6">
    <location>
        <begin position="233"/>
        <end position="235"/>
    </location>
</feature>
<feature type="helix" evidence="6">
    <location>
        <begin position="240"/>
        <end position="242"/>
    </location>
</feature>
<feature type="strand" evidence="6">
    <location>
        <begin position="244"/>
        <end position="249"/>
    </location>
</feature>
<feature type="strand" evidence="6">
    <location>
        <begin position="257"/>
        <end position="266"/>
    </location>
</feature>
<feature type="strand" evidence="6">
    <location>
        <begin position="276"/>
        <end position="286"/>
    </location>
</feature>
<feature type="strand" evidence="6">
    <location>
        <begin position="290"/>
        <end position="302"/>
    </location>
</feature>
<feature type="strand" evidence="6">
    <location>
        <begin position="305"/>
        <end position="308"/>
    </location>
</feature>
<feature type="strand" evidence="6">
    <location>
        <begin position="311"/>
        <end position="322"/>
    </location>
</feature>
<feature type="strand" evidence="6">
    <location>
        <begin position="324"/>
        <end position="342"/>
    </location>
</feature>
<feature type="helix" evidence="6">
    <location>
        <begin position="349"/>
        <end position="354"/>
    </location>
</feature>
<feature type="strand" evidence="6">
    <location>
        <begin position="365"/>
        <end position="379"/>
    </location>
</feature>
<feature type="strand" evidence="6">
    <location>
        <begin position="385"/>
        <end position="404"/>
    </location>
</feature>
<feature type="strand" evidence="6">
    <location>
        <begin position="407"/>
        <end position="410"/>
    </location>
</feature>
<feature type="strand" evidence="6">
    <location>
        <begin position="413"/>
        <end position="430"/>
    </location>
</feature>
<feature type="strand" evidence="6">
    <location>
        <begin position="433"/>
        <end position="456"/>
    </location>
</feature>
<feature type="strand" evidence="6">
    <location>
        <begin position="459"/>
        <end position="461"/>
    </location>
</feature>
<feature type="strand" evidence="7">
    <location>
        <begin position="465"/>
        <end position="467"/>
    </location>
</feature>
<feature type="strand" evidence="6">
    <location>
        <begin position="469"/>
        <end position="490"/>
    </location>
</feature>
<feature type="strand" evidence="6">
    <location>
        <begin position="493"/>
        <end position="510"/>
    </location>
</feature>
<feature type="turn" evidence="6">
    <location>
        <begin position="511"/>
        <end position="513"/>
    </location>
</feature>
<feature type="strand" evidence="6">
    <location>
        <begin position="516"/>
        <end position="535"/>
    </location>
</feature>
<feature type="strand" evidence="6">
    <location>
        <begin position="538"/>
        <end position="549"/>
    </location>
</feature>
<feature type="helix" evidence="6">
    <location>
        <begin position="553"/>
        <end position="555"/>
    </location>
</feature>
<feature type="helix" evidence="6">
    <location>
        <begin position="556"/>
        <end position="561"/>
    </location>
</feature>
<feature type="strand" evidence="6">
    <location>
        <begin position="568"/>
        <end position="580"/>
    </location>
</feature>
<feature type="strand" evidence="6">
    <location>
        <begin position="582"/>
        <end position="600"/>
    </location>
</feature>
<feature type="strand" evidence="6">
    <location>
        <begin position="603"/>
        <end position="605"/>
    </location>
</feature>
<feature type="strand" evidence="6">
    <location>
        <begin position="612"/>
        <end position="626"/>
    </location>
</feature>
<feature type="helix" evidence="6">
    <location>
        <begin position="627"/>
        <end position="629"/>
    </location>
</feature>
<feature type="helix" evidence="6">
    <location>
        <begin position="632"/>
        <end position="634"/>
    </location>
</feature>
<feature type="strand" evidence="6">
    <location>
        <begin position="637"/>
        <end position="650"/>
    </location>
</feature>
<feature type="strand" evidence="6">
    <location>
        <begin position="652"/>
        <end position="654"/>
    </location>
</feature>
<feature type="turn" evidence="6">
    <location>
        <begin position="655"/>
        <end position="658"/>
    </location>
</feature>
<feature type="strand" evidence="6">
    <location>
        <begin position="666"/>
        <end position="675"/>
    </location>
</feature>
<feature type="strand" evidence="6">
    <location>
        <begin position="680"/>
        <end position="689"/>
    </location>
</feature>
<feature type="strand" evidence="6">
    <location>
        <begin position="706"/>
        <end position="709"/>
    </location>
</feature>
<feature type="strand" evidence="6">
    <location>
        <begin position="714"/>
        <end position="724"/>
    </location>
</feature>
<feature type="turn" evidence="6">
    <location>
        <begin position="727"/>
        <end position="730"/>
    </location>
</feature>
<feature type="strand" evidence="6">
    <location>
        <begin position="733"/>
        <end position="740"/>
    </location>
</feature>
<feature type="strand" evidence="6">
    <location>
        <begin position="747"/>
        <end position="750"/>
    </location>
</feature>
<feature type="strand" evidence="6">
    <location>
        <begin position="757"/>
        <end position="760"/>
    </location>
</feature>
<feature type="strand" evidence="6">
    <location>
        <begin position="764"/>
        <end position="774"/>
    </location>
</feature>
<dbReference type="EMBL" id="M20981">
    <property type="protein sequence ID" value="AAA23760.1"/>
    <property type="molecule type" value="Genomic_DNA"/>
</dbReference>
<dbReference type="EMBL" id="U14003">
    <property type="protein sequence ID" value="AAA97187.1"/>
    <property type="molecule type" value="Genomic_DNA"/>
</dbReference>
<dbReference type="EMBL" id="U00096">
    <property type="protein sequence ID" value="AAC77247.1"/>
    <property type="molecule type" value="Genomic_DNA"/>
</dbReference>
<dbReference type="EMBL" id="AP009048">
    <property type="protein sequence ID" value="BAE78282.1"/>
    <property type="molecule type" value="Genomic_DNA"/>
</dbReference>
<dbReference type="EMBL" id="M63115">
    <property type="protein sequence ID" value="AAA23768.1"/>
    <property type="molecule type" value="Genomic_DNA"/>
</dbReference>
<dbReference type="EMBL" id="M26397">
    <property type="protein sequence ID" value="AAA23761.1"/>
    <property type="molecule type" value="Genomic_DNA"/>
</dbReference>
<dbReference type="PIR" id="E65242">
    <property type="entry name" value="QRECFA"/>
</dbReference>
<dbReference type="RefSeq" id="NP_418711.1">
    <property type="nucleotide sequence ID" value="NC_000913.3"/>
</dbReference>
<dbReference type="RefSeq" id="WP_000188283.1">
    <property type="nucleotide sequence ID" value="NZ_LN832404.1"/>
</dbReference>
<dbReference type="PDB" id="1KMO">
    <property type="method" value="X-ray"/>
    <property type="resolution" value="2.00 A"/>
    <property type="chains" value="A=1-774"/>
</dbReference>
<dbReference type="PDB" id="1KMP">
    <property type="method" value="X-ray"/>
    <property type="resolution" value="2.50 A"/>
    <property type="chains" value="A=1-774"/>
</dbReference>
<dbReference type="PDB" id="1PNZ">
    <property type="method" value="X-ray"/>
    <property type="resolution" value="2.50 A"/>
    <property type="chains" value="A=34-774"/>
</dbReference>
<dbReference type="PDB" id="1PO0">
    <property type="method" value="X-ray"/>
    <property type="resolution" value="2.15 A"/>
    <property type="chains" value="A=34-774"/>
</dbReference>
<dbReference type="PDB" id="1PO3">
    <property type="method" value="X-ray"/>
    <property type="resolution" value="3.40 A"/>
    <property type="chains" value="A/B=34-774"/>
</dbReference>
<dbReference type="PDB" id="1ZZV">
    <property type="method" value="NMR"/>
    <property type="chains" value="A=34-113"/>
</dbReference>
<dbReference type="PDB" id="2D1U">
    <property type="method" value="NMR"/>
    <property type="chains" value="A=34-129"/>
</dbReference>
<dbReference type="PDBsum" id="1KMO"/>
<dbReference type="PDBsum" id="1KMP"/>
<dbReference type="PDBsum" id="1PNZ"/>
<dbReference type="PDBsum" id="1PO0"/>
<dbReference type="PDBsum" id="1PO3"/>
<dbReference type="PDBsum" id="1ZZV"/>
<dbReference type="PDBsum" id="2D1U"/>
<dbReference type="BMRB" id="P13036"/>
<dbReference type="SMR" id="P13036"/>
<dbReference type="BioGRID" id="4261554">
    <property type="interactions" value="303"/>
</dbReference>
<dbReference type="ComplexPortal" id="CPX-3576">
    <property type="entry name" value="Ferric-citrate outer membrane transporter complex"/>
</dbReference>
<dbReference type="DIP" id="DIP-9583N"/>
<dbReference type="FunCoup" id="P13036">
    <property type="interactions" value="70"/>
</dbReference>
<dbReference type="IntAct" id="P13036">
    <property type="interactions" value="4"/>
</dbReference>
<dbReference type="STRING" id="511145.b4291"/>
<dbReference type="DrugBank" id="DB04147">
    <property type="generic name" value="Dodecyldimethylamine N-oxide"/>
</dbReference>
<dbReference type="DrugBank" id="DB04079">
    <property type="generic name" value="Heptane-1,2,3-Triol"/>
</dbReference>
<dbReference type="TCDB" id="1.B.14.1.20">
    <property type="family name" value="the outer membrane receptor (omr) family"/>
</dbReference>
<dbReference type="jPOST" id="P13036"/>
<dbReference type="PaxDb" id="511145-b4291"/>
<dbReference type="EnsemblBacteria" id="AAC77247">
    <property type="protein sequence ID" value="AAC77247"/>
    <property type="gene ID" value="b4291"/>
</dbReference>
<dbReference type="GeneID" id="946427"/>
<dbReference type="KEGG" id="ecj:JW4251"/>
<dbReference type="KEGG" id="eco:b4291"/>
<dbReference type="KEGG" id="ecoc:C3026_23140"/>
<dbReference type="PATRIC" id="fig|1411691.4.peg.2408"/>
<dbReference type="EchoBASE" id="EB0282"/>
<dbReference type="eggNOG" id="COG4772">
    <property type="taxonomic scope" value="Bacteria"/>
</dbReference>
<dbReference type="HOGENOM" id="CLU_008287_17_1_6"/>
<dbReference type="InParanoid" id="P13036"/>
<dbReference type="OMA" id="FDHLRRY"/>
<dbReference type="OrthoDB" id="9760494at2"/>
<dbReference type="PhylomeDB" id="P13036"/>
<dbReference type="BioCyc" id="EcoCyc:EG10286-MONOMER"/>
<dbReference type="BioCyc" id="MetaCyc:EG10286-MONOMER"/>
<dbReference type="EvolutionaryTrace" id="P13036"/>
<dbReference type="PHI-base" id="PHI:11750"/>
<dbReference type="PHI-base" id="PHI:8006"/>
<dbReference type="PRO" id="PR:P13036"/>
<dbReference type="Proteomes" id="UP000000625">
    <property type="component" value="Chromosome"/>
</dbReference>
<dbReference type="GO" id="GO:0009279">
    <property type="term" value="C:cell outer membrane"/>
    <property type="evidence" value="ECO:0000314"/>
    <property type="project" value="EcoCyc"/>
</dbReference>
<dbReference type="GO" id="GO:0016020">
    <property type="term" value="C:membrane"/>
    <property type="evidence" value="ECO:0000303"/>
    <property type="project" value="ComplexPortal"/>
</dbReference>
<dbReference type="GO" id="GO:1902495">
    <property type="term" value="C:transmembrane transporter complex"/>
    <property type="evidence" value="ECO:0000303"/>
    <property type="project" value="ComplexPortal"/>
</dbReference>
<dbReference type="GO" id="GO:0015343">
    <property type="term" value="F:siderophore-iron transmembrane transporter activity"/>
    <property type="evidence" value="ECO:0007669"/>
    <property type="project" value="InterPro"/>
</dbReference>
<dbReference type="GO" id="GO:0038023">
    <property type="term" value="F:signaling receptor activity"/>
    <property type="evidence" value="ECO:0000314"/>
    <property type="project" value="EcoCyc"/>
</dbReference>
<dbReference type="GO" id="GO:0006879">
    <property type="term" value="P:intracellular iron ion homeostasis"/>
    <property type="evidence" value="ECO:0000303"/>
    <property type="project" value="ComplexPortal"/>
</dbReference>
<dbReference type="GO" id="GO:0006355">
    <property type="term" value="P:regulation of DNA-templated transcription"/>
    <property type="evidence" value="ECO:0000315"/>
    <property type="project" value="EcoCyc"/>
</dbReference>
<dbReference type="GO" id="GO:1990641">
    <property type="term" value="P:response to iron ion starvation"/>
    <property type="evidence" value="ECO:0000315"/>
    <property type="project" value="EcoCyc"/>
</dbReference>
<dbReference type="GO" id="GO:0033214">
    <property type="term" value="P:siderophore-dependent iron import into cell"/>
    <property type="evidence" value="ECO:0000315"/>
    <property type="project" value="EcoCyc"/>
</dbReference>
<dbReference type="GO" id="GO:0023019">
    <property type="term" value="P:signal transduction involved in regulation of gene expression"/>
    <property type="evidence" value="ECO:0000304"/>
    <property type="project" value="EcoCyc"/>
</dbReference>
<dbReference type="CDD" id="cd01347">
    <property type="entry name" value="ligand_gated_channel"/>
    <property type="match status" value="1"/>
</dbReference>
<dbReference type="FunFam" id="2.170.130.10:FF:000007">
    <property type="entry name" value="Fe(3+) dicitrate transport protein FecA"/>
    <property type="match status" value="1"/>
</dbReference>
<dbReference type="FunFam" id="2.40.170.20:FF:000009">
    <property type="entry name" value="Fe(3+) dicitrate transport protein FecA"/>
    <property type="match status" value="1"/>
</dbReference>
<dbReference type="Gene3D" id="3.55.50.30">
    <property type="match status" value="1"/>
</dbReference>
<dbReference type="Gene3D" id="2.40.170.20">
    <property type="entry name" value="TonB-dependent receptor, beta-barrel domain"/>
    <property type="match status" value="1"/>
</dbReference>
<dbReference type="Gene3D" id="2.170.130.10">
    <property type="entry name" value="TonB-dependent receptor, plug domain"/>
    <property type="match status" value="1"/>
</dbReference>
<dbReference type="InterPro" id="IPR049654">
    <property type="entry name" value="FecA-like"/>
</dbReference>
<dbReference type="InterPro" id="IPR012910">
    <property type="entry name" value="Plug_dom"/>
</dbReference>
<dbReference type="InterPro" id="IPR037066">
    <property type="entry name" value="Plug_dom_sf"/>
</dbReference>
<dbReference type="InterPro" id="IPR011662">
    <property type="entry name" value="Secretin/TonB_short_N"/>
</dbReference>
<dbReference type="InterPro" id="IPR039426">
    <property type="entry name" value="TonB-dep_rcpt-like"/>
</dbReference>
<dbReference type="InterPro" id="IPR000531">
    <property type="entry name" value="TonB-dep_rcpt_b-brl"/>
</dbReference>
<dbReference type="InterPro" id="IPR010916">
    <property type="entry name" value="TonB_box_CS"/>
</dbReference>
<dbReference type="InterPro" id="IPR036942">
    <property type="entry name" value="TonB_rcpt_b-brl_sf"/>
</dbReference>
<dbReference type="InterPro" id="IPR010917">
    <property type="entry name" value="TonB_rcpt_CS"/>
</dbReference>
<dbReference type="InterPro" id="IPR010105">
    <property type="entry name" value="TonB_sidphr_rcpt"/>
</dbReference>
<dbReference type="NCBIfam" id="NF041676">
    <property type="entry name" value="FecA_OM_dicitr"/>
    <property type="match status" value="1"/>
</dbReference>
<dbReference type="NCBIfam" id="TIGR01783">
    <property type="entry name" value="TonB-siderophor"/>
    <property type="match status" value="1"/>
</dbReference>
<dbReference type="PANTHER" id="PTHR30442:SF0">
    <property type="entry name" value="FE(3+) DICITRATE TRANSPORT PROTEIN FECA"/>
    <property type="match status" value="1"/>
</dbReference>
<dbReference type="PANTHER" id="PTHR30442">
    <property type="entry name" value="IRON III DICITRATE TRANSPORT PROTEIN FECA"/>
    <property type="match status" value="1"/>
</dbReference>
<dbReference type="Pfam" id="PF07715">
    <property type="entry name" value="Plug"/>
    <property type="match status" value="1"/>
</dbReference>
<dbReference type="Pfam" id="PF07660">
    <property type="entry name" value="STN"/>
    <property type="match status" value="1"/>
</dbReference>
<dbReference type="Pfam" id="PF00593">
    <property type="entry name" value="TonB_dep_Rec_b-barrel"/>
    <property type="match status" value="1"/>
</dbReference>
<dbReference type="SMART" id="SM00965">
    <property type="entry name" value="STN"/>
    <property type="match status" value="1"/>
</dbReference>
<dbReference type="SUPFAM" id="SSF56935">
    <property type="entry name" value="Porins"/>
    <property type="match status" value="1"/>
</dbReference>
<dbReference type="PROSITE" id="PS00430">
    <property type="entry name" value="TONB_DEPENDENT_REC_1"/>
    <property type="match status" value="1"/>
</dbReference>
<dbReference type="PROSITE" id="PS01156">
    <property type="entry name" value="TONB_DEPENDENT_REC_2"/>
    <property type="match status" value="1"/>
</dbReference>
<dbReference type="PROSITE" id="PS52016">
    <property type="entry name" value="TONB_DEPENDENT_REC_3"/>
    <property type="match status" value="1"/>
</dbReference>
<keyword id="KW-0002">3D-structure</keyword>
<keyword id="KW-0998">Cell outer membrane</keyword>
<keyword id="KW-0903">Direct protein sequencing</keyword>
<keyword id="KW-0406">Ion transport</keyword>
<keyword id="KW-0408">Iron</keyword>
<keyword id="KW-0410">Iron transport</keyword>
<keyword id="KW-0472">Membrane</keyword>
<keyword id="KW-0675">Receptor</keyword>
<keyword id="KW-1185">Reference proteome</keyword>
<keyword id="KW-0732">Signal</keyword>
<keyword id="KW-0798">TonB box</keyword>
<keyword id="KW-0812">Transmembrane</keyword>
<keyword id="KW-1134">Transmembrane beta strand</keyword>
<keyword id="KW-0813">Transport</keyword>
<accession>P13036</accession>
<accession>Q2M624</accession>
<proteinExistence type="evidence at protein level"/>